<accession>P0DI23</accession>
<dbReference type="GO" id="GO:0005886">
    <property type="term" value="C:plasma membrane"/>
    <property type="evidence" value="ECO:0007669"/>
    <property type="project" value="UniProtKB-SubCell"/>
</dbReference>
<dbReference type="InterPro" id="IPR006459">
    <property type="entry name" value="CASP/CASPL"/>
</dbReference>
<dbReference type="InterPro" id="IPR006702">
    <property type="entry name" value="CASP_dom"/>
</dbReference>
<dbReference type="NCBIfam" id="TIGR01569">
    <property type="entry name" value="A_tha_TIGR01569"/>
    <property type="match status" value="1"/>
</dbReference>
<dbReference type="PANTHER" id="PTHR33573">
    <property type="entry name" value="CASP-LIKE PROTEIN 4A4"/>
    <property type="match status" value="1"/>
</dbReference>
<dbReference type="PANTHER" id="PTHR33573:SF56">
    <property type="entry name" value="CASP-LIKE PROTEIN 4C1"/>
    <property type="match status" value="1"/>
</dbReference>
<dbReference type="Pfam" id="PF04535">
    <property type="entry name" value="CASP_dom"/>
    <property type="match status" value="1"/>
</dbReference>
<proteinExistence type="inferred from homology"/>
<evidence type="ECO:0000250" key="1"/>
<evidence type="ECO:0000255" key="2"/>
<evidence type="ECO:0000256" key="3">
    <source>
        <dbReference type="SAM" id="MobiDB-lite"/>
    </source>
</evidence>
<evidence type="ECO:0000305" key="4"/>
<name>CSPL2_PTEAA</name>
<gene>
    <name type="ORF">PtaqContig2277</name>
</gene>
<comment type="subunit">
    <text evidence="1">Homodimer and heterodimers.</text>
</comment>
<comment type="subcellular location">
    <subcellularLocation>
        <location evidence="1">Cell membrane</location>
        <topology evidence="1">Multi-pass membrane protein</topology>
    </subcellularLocation>
</comment>
<comment type="similarity">
    <text evidence="4">Belongs to the Casparian strip membrane proteins (CASP) family.</text>
</comment>
<keyword id="KW-1003">Cell membrane</keyword>
<keyword id="KW-0472">Membrane</keyword>
<keyword id="KW-0812">Transmembrane</keyword>
<keyword id="KW-1133">Transmembrane helix</keyword>
<protein>
    <recommendedName>
        <fullName>CASP-like protein 4C1</fullName>
        <shortName>PaCASPL4C1</shortName>
    </recommendedName>
</protein>
<reference key="1">
    <citation type="journal article" date="2011" name="BMC Genomics">
        <title>De novo characterization of the gametophyte transcriptome in bracken fern, Pteridium aquilinum.</title>
        <authorList>
            <person name="Der J.P."/>
            <person name="Barker M.S."/>
            <person name="Wickett N.J."/>
            <person name="dePamphilis C.W."/>
            <person name="Wolf P.G."/>
        </authorList>
    </citation>
    <scope>NUCLEOTIDE SEQUENCE [LARGE SCALE MRNA]</scope>
    <source>
        <strain>Wolf 83</strain>
        <tissue>Gametophyte</tissue>
    </source>
</reference>
<reference key="2">
    <citation type="journal article" date="2014" name="Plant Physiol.">
        <title>Functional and evolutionary analysis of the CASPARIAN STRIP MEMBRANE DOMAIN PROTEIN family.</title>
        <authorList>
            <person name="Roppolo D."/>
            <person name="Boeckmann B."/>
            <person name="Pfister A."/>
            <person name="Boutet E."/>
            <person name="Rubio M.C."/>
            <person name="Denervaud-Tendon V."/>
            <person name="Vermeer J.E."/>
            <person name="Gheyselinck J."/>
            <person name="Xenarios I."/>
            <person name="Geldner N."/>
        </authorList>
    </citation>
    <scope>GENE FAMILY</scope>
    <scope>NOMENCLATURE</scope>
</reference>
<organism>
    <name type="scientific">Pteridium aquilinum subsp. aquilinum</name>
    <name type="common">Bracken fern</name>
    <dbReference type="NCBI Taxonomy" id="104588"/>
    <lineage>
        <taxon>Eukaryota</taxon>
        <taxon>Viridiplantae</taxon>
        <taxon>Streptophyta</taxon>
        <taxon>Embryophyta</taxon>
        <taxon>Tracheophyta</taxon>
        <taxon>Polypodiopsida</taxon>
        <taxon>Polypodiidae</taxon>
        <taxon>Polypodiales</taxon>
        <taxon>Dennstaedtiineae</taxon>
        <taxon>Dennstaedtiaceae</taxon>
        <taxon>Pteridium</taxon>
    </lineage>
</organism>
<feature type="chain" id="PRO_0000417795" description="CASP-like protein 4C1">
    <location>
        <begin position="1"/>
        <end position="221"/>
    </location>
</feature>
<feature type="topological domain" description="Cytoplasmic" evidence="2">
    <location>
        <begin position="1"/>
        <end position="54"/>
    </location>
</feature>
<feature type="transmembrane region" description="Helical" evidence="2">
    <location>
        <begin position="55"/>
        <end position="75"/>
    </location>
</feature>
<feature type="topological domain" description="Extracellular" evidence="2">
    <location>
        <begin position="76"/>
        <end position="101"/>
    </location>
</feature>
<feature type="transmembrane region" description="Helical" evidence="2">
    <location>
        <begin position="102"/>
        <end position="122"/>
    </location>
</feature>
<feature type="topological domain" description="Cytoplasmic" evidence="2">
    <location>
        <begin position="123"/>
        <end position="144"/>
    </location>
</feature>
<feature type="transmembrane region" description="Helical" evidence="2">
    <location>
        <begin position="145"/>
        <end position="165"/>
    </location>
</feature>
<feature type="topological domain" description="Extracellular" evidence="2">
    <location>
        <begin position="166"/>
        <end position="189"/>
    </location>
</feature>
<feature type="transmembrane region" description="Helical" evidence="2">
    <location>
        <begin position="190"/>
        <end position="210"/>
    </location>
</feature>
<feature type="topological domain" description="Cytoplasmic" evidence="2">
    <location>
        <begin position="211"/>
        <end position="221"/>
    </location>
</feature>
<feature type="region of interest" description="Disordered" evidence="3">
    <location>
        <begin position="1"/>
        <end position="21"/>
    </location>
</feature>
<sequence>MDSPESSDRGLNPMTPDHGGHNGKVVHYFGQGVEGGPASPRKLGHGHLHPKANTALLLLRLLTFAFSLASLVIMATNSATTTATAGRHRTVNWVDFDTYRYVLAACAIVCLYSFAEIGLGLWYLLKGRMVMPESMAHWFDFGHDQGFAYLIFSACSGATAVAHNLRERHILIHGMYGCDEANSFCMKAEISIGLAFGAFLFIALSSLLSGYRLVKWLILGP</sequence>